<dbReference type="EMBL" id="L77117">
    <property type="protein sequence ID" value="AAB97985.1"/>
    <property type="molecule type" value="Genomic_DNA"/>
</dbReference>
<dbReference type="PIR" id="D64300">
    <property type="entry name" value="D64300"/>
</dbReference>
<dbReference type="RefSeq" id="WP_010869497.1">
    <property type="nucleotide sequence ID" value="NC_000909.1"/>
</dbReference>
<dbReference type="SMR" id="Q60315"/>
<dbReference type="FunCoup" id="Q60315">
    <property type="interactions" value="2"/>
</dbReference>
<dbReference type="STRING" id="243232.MJ_0004"/>
<dbReference type="PaxDb" id="243232-MJ_0004"/>
<dbReference type="EnsemblBacteria" id="AAB97985">
    <property type="protein sequence ID" value="AAB97985"/>
    <property type="gene ID" value="MJ_0004"/>
</dbReference>
<dbReference type="GeneID" id="1450843"/>
<dbReference type="KEGG" id="mja:MJ_0004"/>
<dbReference type="eggNOG" id="arCOG02678">
    <property type="taxonomic scope" value="Archaea"/>
</dbReference>
<dbReference type="HOGENOM" id="CLU_066597_0_0_2"/>
<dbReference type="InParanoid" id="Q60315"/>
<dbReference type="OrthoDB" id="114976at2157"/>
<dbReference type="PhylomeDB" id="Q60315"/>
<dbReference type="Proteomes" id="UP000000805">
    <property type="component" value="Chromosome"/>
</dbReference>
<dbReference type="GO" id="GO:0051539">
    <property type="term" value="F:4 iron, 4 sulfur cluster binding"/>
    <property type="evidence" value="ECO:0007669"/>
    <property type="project" value="UniProtKB-KW"/>
</dbReference>
<dbReference type="GO" id="GO:0046872">
    <property type="term" value="F:metal ion binding"/>
    <property type="evidence" value="ECO:0007669"/>
    <property type="project" value="UniProtKB-KW"/>
</dbReference>
<dbReference type="CDD" id="cd24109">
    <property type="entry name" value="ASKHA_NBD_YjiL-like"/>
    <property type="match status" value="1"/>
</dbReference>
<dbReference type="Gene3D" id="3.30.420.40">
    <property type="match status" value="2"/>
</dbReference>
<dbReference type="InterPro" id="IPR002731">
    <property type="entry name" value="ATPase_BadF"/>
</dbReference>
<dbReference type="InterPro" id="IPR043129">
    <property type="entry name" value="ATPase_NBD"/>
</dbReference>
<dbReference type="InterPro" id="IPR008275">
    <property type="entry name" value="CoA_E_activase_dom"/>
</dbReference>
<dbReference type="InterPro" id="IPR051805">
    <property type="entry name" value="Dehydratase_Activator_Redct"/>
</dbReference>
<dbReference type="NCBIfam" id="TIGR00241">
    <property type="entry name" value="CoA_E_activ"/>
    <property type="match status" value="1"/>
</dbReference>
<dbReference type="PANTHER" id="PTHR32329:SF2">
    <property type="entry name" value="BIFUNCTIONAL PROTEIN [INCLUDES 2-HYDROXYACYL-COA DEHYDRATASE (N-TER) AND ITS ACTIVATOR DOMAIN (C_TERM)"/>
    <property type="match status" value="1"/>
</dbReference>
<dbReference type="PANTHER" id="PTHR32329">
    <property type="entry name" value="BIFUNCTIONAL PROTEIN [INCLUDES 2-HYDROXYACYL-COA DEHYDRATASE (N-TER) AND ITS ACTIVATOR DOMAIN (C_TERM)-RELATED"/>
    <property type="match status" value="1"/>
</dbReference>
<dbReference type="Pfam" id="PF01869">
    <property type="entry name" value="BcrAD_BadFG"/>
    <property type="match status" value="1"/>
</dbReference>
<dbReference type="SUPFAM" id="SSF53067">
    <property type="entry name" value="Actin-like ATPase domain"/>
    <property type="match status" value="1"/>
</dbReference>
<accession>Q60315</accession>
<proteinExistence type="predicted"/>
<comment type="cofactor">
    <cofactor evidence="2">
        <name>[4Fe-4S] cluster</name>
        <dbReference type="ChEBI" id="CHEBI:49883"/>
    </cofactor>
    <text evidence="2">Binds 1 [4Fe-4S] cluster per dimer.</text>
</comment>
<comment type="subunit">
    <text evidence="2">Homodimer.</text>
</comment>
<reference key="1">
    <citation type="journal article" date="1996" name="Science">
        <title>Complete genome sequence of the methanogenic archaeon, Methanococcus jannaschii.</title>
        <authorList>
            <person name="Bult C.J."/>
            <person name="White O."/>
            <person name="Olsen G.J."/>
            <person name="Zhou L."/>
            <person name="Fleischmann R.D."/>
            <person name="Sutton G.G."/>
            <person name="Blake J.A."/>
            <person name="FitzGerald L.M."/>
            <person name="Clayton R.A."/>
            <person name="Gocayne J.D."/>
            <person name="Kerlavage A.R."/>
            <person name="Dougherty B.A."/>
            <person name="Tomb J.-F."/>
            <person name="Adams M.D."/>
            <person name="Reich C.I."/>
            <person name="Overbeek R."/>
            <person name="Kirkness E.F."/>
            <person name="Weinstock K.G."/>
            <person name="Merrick J.M."/>
            <person name="Glodek A."/>
            <person name="Scott J.L."/>
            <person name="Geoghagen N.S.M."/>
            <person name="Weidman J.F."/>
            <person name="Fuhrmann J.L."/>
            <person name="Nguyen D."/>
            <person name="Utterback T.R."/>
            <person name="Kelley J.M."/>
            <person name="Peterson J.D."/>
            <person name="Sadow P.W."/>
            <person name="Hanna M.C."/>
            <person name="Cotton M.D."/>
            <person name="Roberts K.M."/>
            <person name="Hurst M.A."/>
            <person name="Kaine B.P."/>
            <person name="Borodovsky M."/>
            <person name="Klenk H.-P."/>
            <person name="Fraser C.M."/>
            <person name="Smith H.O."/>
            <person name="Woese C.R."/>
            <person name="Venter J.C."/>
        </authorList>
    </citation>
    <scope>NUCLEOTIDE SEQUENCE [LARGE SCALE GENOMIC DNA]</scope>
    <source>
        <strain>ATCC 43067 / DSM 2661 / JAL-1 / JCM 10045 / NBRC 100440</strain>
    </source>
</reference>
<feature type="chain" id="PRO_0000106647" description="Uncharacterized protein MJ0004">
    <location>
        <begin position="1"/>
        <end position="243"/>
    </location>
</feature>
<feature type="binding site" evidence="1">
    <location>
        <position position="120"/>
    </location>
    <ligand>
        <name>[4Fe-4S] cluster</name>
        <dbReference type="ChEBI" id="CHEBI:49883"/>
        <note>ligand shared between dimeric partners</note>
    </ligand>
</feature>
<feature type="binding site" evidence="1">
    <location>
        <position position="157"/>
    </location>
    <ligand>
        <name>[4Fe-4S] cluster</name>
        <dbReference type="ChEBI" id="CHEBI:49883"/>
        <note>ligand shared between dimeric partners</note>
    </ligand>
</feature>
<organism>
    <name type="scientific">Methanocaldococcus jannaschii (strain ATCC 43067 / DSM 2661 / JAL-1 / JCM 10045 / NBRC 100440)</name>
    <name type="common">Methanococcus jannaschii</name>
    <dbReference type="NCBI Taxonomy" id="243232"/>
    <lineage>
        <taxon>Archaea</taxon>
        <taxon>Methanobacteriati</taxon>
        <taxon>Methanobacteriota</taxon>
        <taxon>Methanomada group</taxon>
        <taxon>Methanococci</taxon>
        <taxon>Methanococcales</taxon>
        <taxon>Methanocaldococcaceae</taxon>
        <taxon>Methanocaldococcus</taxon>
    </lineage>
</organism>
<name>Y004_METJA</name>
<gene>
    <name type="ordered locus">MJ0004</name>
</gene>
<sequence>MILGIDVGSTTTKMVLMEDSKIIWYKIEDIGVVIEEDILLKMVKEIEQKYPIDKIVATGYGRHKVSFADKIVPEVIALGKGANYFFNEADGVIDIGGQDTKVLKIDKNGKVVDFILSDKCAAGTGKFLEKALDILKIDKNEINKYKSDNIAKISSMCAVFAESEIISLLSKKVPKEGILMGVYESIINRVIPMTNRLKIQNIVFSGGVAKNKVLVEMFEKKLNKKLLIPKEPQIVCCVGAILV</sequence>
<keyword id="KW-0004">4Fe-4S</keyword>
<keyword id="KW-0408">Iron</keyword>
<keyword id="KW-0411">Iron-sulfur</keyword>
<keyword id="KW-0479">Metal-binding</keyword>
<keyword id="KW-1185">Reference proteome</keyword>
<evidence type="ECO:0000255" key="1"/>
<evidence type="ECO:0000305" key="2"/>
<protein>
    <recommendedName>
        <fullName>Uncharacterized protein MJ0004</fullName>
    </recommendedName>
</protein>